<organism>
    <name type="scientific">Shewanella woodyi (strain ATCC 51908 / MS32)</name>
    <dbReference type="NCBI Taxonomy" id="392500"/>
    <lineage>
        <taxon>Bacteria</taxon>
        <taxon>Pseudomonadati</taxon>
        <taxon>Pseudomonadota</taxon>
        <taxon>Gammaproteobacteria</taxon>
        <taxon>Alteromonadales</taxon>
        <taxon>Shewanellaceae</taxon>
        <taxon>Shewanella</taxon>
    </lineage>
</organism>
<keyword id="KW-0066">ATP synthesis</keyword>
<keyword id="KW-0997">Cell inner membrane</keyword>
<keyword id="KW-1003">Cell membrane</keyword>
<keyword id="KW-0139">CF(1)</keyword>
<keyword id="KW-0375">Hydrogen ion transport</keyword>
<keyword id="KW-0406">Ion transport</keyword>
<keyword id="KW-0472">Membrane</keyword>
<keyword id="KW-1185">Reference proteome</keyword>
<keyword id="KW-0813">Transport</keyword>
<reference key="1">
    <citation type="submission" date="2008-02" db="EMBL/GenBank/DDBJ databases">
        <title>Complete sequence of Shewanella woodyi ATCC 51908.</title>
        <authorList>
            <consortium name="US DOE Joint Genome Institute"/>
            <person name="Copeland A."/>
            <person name="Lucas S."/>
            <person name="Lapidus A."/>
            <person name="Glavina del Rio T."/>
            <person name="Dalin E."/>
            <person name="Tice H."/>
            <person name="Bruce D."/>
            <person name="Goodwin L."/>
            <person name="Pitluck S."/>
            <person name="Sims D."/>
            <person name="Brettin T."/>
            <person name="Detter J.C."/>
            <person name="Han C."/>
            <person name="Kuske C.R."/>
            <person name="Schmutz J."/>
            <person name="Larimer F."/>
            <person name="Land M."/>
            <person name="Hauser L."/>
            <person name="Kyrpides N."/>
            <person name="Lykidis A."/>
            <person name="Zhao J.-S."/>
            <person name="Richardson P."/>
        </authorList>
    </citation>
    <scope>NUCLEOTIDE SEQUENCE [LARGE SCALE GENOMIC DNA]</scope>
    <source>
        <strain>ATCC 51908 / MS32</strain>
    </source>
</reference>
<protein>
    <recommendedName>
        <fullName evidence="1">ATP synthase subunit delta</fullName>
    </recommendedName>
    <alternativeName>
        <fullName evidence="1">ATP synthase F(1) sector subunit delta</fullName>
    </alternativeName>
    <alternativeName>
        <fullName evidence="1">F-type ATPase subunit delta</fullName>
        <shortName evidence="1">F-ATPase subunit delta</shortName>
    </alternativeName>
</protein>
<feature type="chain" id="PRO_0000371137" description="ATP synthase subunit delta">
    <location>
        <begin position="1"/>
        <end position="177"/>
    </location>
</feature>
<name>ATPD_SHEWM</name>
<proteinExistence type="inferred from homology"/>
<accession>B1KQ37</accession>
<sequence length="177" mass="19254">MAEITTIARPYAKAAFDFAIEKNAVDSWAEMLNFAAMVSENETMKPLLSGSLASHQLAELFIGVCGEQVNEQGQNLLKVMAENGRLETLPAVSQLFVEMKHEWAKEIEANVVSATELSSEQQQEISVSLEKRLTRKVKLNCSIDASLIAGLIITAGDLVIDGSVRGKVSRLSDSLQS</sequence>
<comment type="function">
    <text evidence="1">F(1)F(0) ATP synthase produces ATP from ADP in the presence of a proton or sodium gradient. F-type ATPases consist of two structural domains, F(1) containing the extramembraneous catalytic core and F(0) containing the membrane proton channel, linked together by a central stalk and a peripheral stalk. During catalysis, ATP synthesis in the catalytic domain of F(1) is coupled via a rotary mechanism of the central stalk subunits to proton translocation.</text>
</comment>
<comment type="function">
    <text evidence="1">This protein is part of the stalk that links CF(0) to CF(1). It either transmits conformational changes from CF(0) to CF(1) or is implicated in proton conduction.</text>
</comment>
<comment type="subunit">
    <text evidence="1">F-type ATPases have 2 components, F(1) - the catalytic core - and F(0) - the membrane proton channel. F(1) has five subunits: alpha(3), beta(3), gamma(1), delta(1), epsilon(1). F(0) has three main subunits: a(1), b(2) and c(10-14). The alpha and beta chains form an alternating ring which encloses part of the gamma chain. F(1) is attached to F(0) by a central stalk formed by the gamma and epsilon chains, while a peripheral stalk is formed by the delta and b chains.</text>
</comment>
<comment type="subcellular location">
    <subcellularLocation>
        <location evidence="1">Cell inner membrane</location>
        <topology evidence="1">Peripheral membrane protein</topology>
    </subcellularLocation>
</comment>
<comment type="similarity">
    <text evidence="1">Belongs to the ATPase delta chain family.</text>
</comment>
<dbReference type="EMBL" id="CP000961">
    <property type="protein sequence ID" value="ACA89150.1"/>
    <property type="molecule type" value="Genomic_DNA"/>
</dbReference>
<dbReference type="RefSeq" id="WP_012327467.1">
    <property type="nucleotide sequence ID" value="NC_010506.1"/>
</dbReference>
<dbReference type="SMR" id="B1KQ37"/>
<dbReference type="STRING" id="392500.Swoo_4901"/>
<dbReference type="KEGG" id="swd:Swoo_4901"/>
<dbReference type="eggNOG" id="COG0712">
    <property type="taxonomic scope" value="Bacteria"/>
</dbReference>
<dbReference type="HOGENOM" id="CLU_085114_3_0_6"/>
<dbReference type="Proteomes" id="UP000002168">
    <property type="component" value="Chromosome"/>
</dbReference>
<dbReference type="GO" id="GO:0005886">
    <property type="term" value="C:plasma membrane"/>
    <property type="evidence" value="ECO:0007669"/>
    <property type="project" value="UniProtKB-SubCell"/>
</dbReference>
<dbReference type="GO" id="GO:0045259">
    <property type="term" value="C:proton-transporting ATP synthase complex"/>
    <property type="evidence" value="ECO:0007669"/>
    <property type="project" value="UniProtKB-KW"/>
</dbReference>
<dbReference type="GO" id="GO:0046933">
    <property type="term" value="F:proton-transporting ATP synthase activity, rotational mechanism"/>
    <property type="evidence" value="ECO:0007669"/>
    <property type="project" value="UniProtKB-UniRule"/>
</dbReference>
<dbReference type="Gene3D" id="1.10.520.20">
    <property type="entry name" value="N-terminal domain of the delta subunit of the F1F0-ATP synthase"/>
    <property type="match status" value="1"/>
</dbReference>
<dbReference type="HAMAP" id="MF_01416">
    <property type="entry name" value="ATP_synth_delta_bact"/>
    <property type="match status" value="1"/>
</dbReference>
<dbReference type="InterPro" id="IPR026015">
    <property type="entry name" value="ATP_synth_OSCP/delta_N_sf"/>
</dbReference>
<dbReference type="InterPro" id="IPR000711">
    <property type="entry name" value="ATPase_OSCP/dsu"/>
</dbReference>
<dbReference type="NCBIfam" id="TIGR01145">
    <property type="entry name" value="ATP_synt_delta"/>
    <property type="match status" value="1"/>
</dbReference>
<dbReference type="NCBIfam" id="NF004402">
    <property type="entry name" value="PRK05758.2-2"/>
    <property type="match status" value="1"/>
</dbReference>
<dbReference type="NCBIfam" id="NF004404">
    <property type="entry name" value="PRK05758.2-5"/>
    <property type="match status" value="1"/>
</dbReference>
<dbReference type="PANTHER" id="PTHR11910">
    <property type="entry name" value="ATP SYNTHASE DELTA CHAIN"/>
    <property type="match status" value="1"/>
</dbReference>
<dbReference type="Pfam" id="PF00213">
    <property type="entry name" value="OSCP"/>
    <property type="match status" value="1"/>
</dbReference>
<dbReference type="PRINTS" id="PR00125">
    <property type="entry name" value="ATPASEDELTA"/>
</dbReference>
<dbReference type="SUPFAM" id="SSF47928">
    <property type="entry name" value="N-terminal domain of the delta subunit of the F1F0-ATP synthase"/>
    <property type="match status" value="1"/>
</dbReference>
<gene>
    <name evidence="1" type="primary">atpH</name>
    <name type="ordered locus">Swoo_4901</name>
</gene>
<evidence type="ECO:0000255" key="1">
    <source>
        <dbReference type="HAMAP-Rule" id="MF_01416"/>
    </source>
</evidence>